<accession>P0DV66</accession>
<accession>A0A944D5G7</accession>
<evidence type="ECO:0000250" key="1">
    <source>
        <dbReference type="UniProtKB" id="A0A391NTR7"/>
    </source>
</evidence>
<evidence type="ECO:0000250" key="2">
    <source>
        <dbReference type="UniProtKB" id="Q7SIF4"/>
    </source>
</evidence>
<evidence type="ECO:0000256" key="3">
    <source>
        <dbReference type="SAM" id="MobiDB-lite"/>
    </source>
</evidence>
<evidence type="ECO:0000269" key="4">
    <source>
    </source>
</evidence>
<evidence type="ECO:0000303" key="5">
    <source>
    </source>
</evidence>
<evidence type="ECO:0000305" key="6"/>
<evidence type="ECO:0000305" key="7">
    <source>
    </source>
</evidence>
<evidence type="ECO:0000312" key="8">
    <source>
        <dbReference type="EMBL" id="MBT0960284.1"/>
    </source>
</evidence>
<keyword id="KW-0003">3Fe-4S</keyword>
<keyword id="KW-0408">Iron</keyword>
<keyword id="KW-0411">Iron-sulfur</keyword>
<keyword id="KW-0479">Metal-binding</keyword>
<keyword id="KW-0500">Molybdenum</keyword>
<keyword id="KW-0560">Oxidoreductase</keyword>
<keyword id="KW-0574">Periplasm</keyword>
<keyword id="KW-1185">Reference proteome</keyword>
<gene>
    <name evidence="5" type="primary">idrA</name>
    <name evidence="8" type="ORF">I8J34_03775</name>
</gene>
<sequence length="900" mass="101089">MSENIKQGGAGTFMQAPQDSVPLPPKDAEVMTTACDYCTVACGYKVYRWPVGKEGGMKAKDNAFNADFPHQQIFGAWASPAQHNIVNHNGRSHHVLVLPDRDTTVVNPGGNHSIRGGTLAQKCYNPSNRTSERLLYPMIRVRGTLMPVSWDLATEVMADISQYILAKYGEHAWAMKTYSYQYFENTYAITKLGMTSIGTPAFAWHDKASATNDATGLDDAGVNSFASSDQDWADCEVAFLSGVDPYETKTTLFTQWMMPGDKKFIFVTPHRTMGVAWAESTGRGMWLPIIPGTDTVLHLALARIIVENGWQDQAFIDKWVANKWEVDSGYGRGTRNTGWQWRTTWGKWQSDWKDYSAWILKQKEGELETAAKITGLRAEDIRKAAEWIAKPKADGTRVKASFMLEKGNYWTNNYMNSASLASLGLICGSGNRPGQMISRGGGHQRGGMSAGGGSGWLSPEKYPGRRKKSFNLDRWMMNGNVRFAWVIGTTWTAAMMASQALQDKMFSLTRGNPHQISSLDRKAIFETLKQRVDSGGTVIANSDIYPCVPVGTEYADIVLPAATWGEDNFTRCNSERRLRLYSKFYDAPGEAKPDWWIIAKFAQKMGYDKDGSYQWKNSNDVFEEAARFGRNGVLNYHPLVVKAKEKGVKGHELLRTYGTDGIQTPIRMKDGELVGTQRLHDPANDWDEVEGQEVKRKWLYAFGTHSGKAILLKTPWDYPGWSQFYKAALPRKEKGEVWVTNGRVNETWQSGFDDLRKPYLSQRWPYPMLIMHPDEAKPRGIESGDFVQVYNDTVYIQMGEPQGVKEDDLYFDTLMKNGHIKTTDGQFVAVAIVSEEMRPGVVMANFNYPQAPANSVVHAVPDPMTNNYRYKLGRGVLTKVGESPYKHSFTSMTLKPRDIV</sequence>
<comment type="function">
    <text evidence="4">Involved in iodate respiration (PubMed:34215855). May accept electrons from cytochrome c551, and catalyze the reduction of iodate (IO(3)(-)) to produce the chemically unstable intermediate hypoiodous acid (HIO). This intermediate then undergoes abiotic disproportionation to yield two molecules of iodide (I(-)) and one molecule of iodate. The resultant iodate subsequently cycles back into the reductive pathway (PubMed:34215855). The initial reduction of iodate may inadvertently produce low levels of incidental toxic H(2)O(2), which is detoxified by IdrP1 and IdrP2 (PubMed:34215855).</text>
</comment>
<comment type="cofactor">
    <cofactor evidence="2">
        <name>[3Fe-4S] cluster</name>
        <dbReference type="ChEBI" id="CHEBI:21137"/>
    </cofactor>
    <text evidence="2">Binds 1 [3Fe-4S] cluster per subunit.</text>
</comment>
<comment type="cofactor">
    <cofactor evidence="2">
        <name>Mo-bis(molybdopterin guanine dinucleotide)</name>
        <dbReference type="ChEBI" id="CHEBI:60539"/>
    </cofactor>
    <text evidence="2">Binds 1 molybdenum-bis(molybdopterin guanine dinucleotide) (Mo-bis-MGD) cofactor per subunit.</text>
</comment>
<comment type="subunit">
    <text evidence="7">The iodate reductase (Idr) complex is composed of a molybdopterin-dependent iodate reductase (IdrA and IdrB subunits) and two associated peroxidases (IdrP1 and IdrP2).</text>
</comment>
<comment type="subcellular location">
    <subcellularLocation>
        <location evidence="1">Periplasm</location>
    </subcellularLocation>
    <text evidence="5">May be co-transported with IdrB into the periplasm.</text>
</comment>
<comment type="disruption phenotype">
    <text evidence="4">Deletion mutant is incapable of growth via iodate respiration, while growth under oxic conditions remains unimpaired.</text>
</comment>
<comment type="similarity">
    <text evidence="6">Belongs to the prokaryotic molybdopterin-containing oxidoreductase family.</text>
</comment>
<organism>
    <name type="scientific">Denitromonas iodatirespirans</name>
    <dbReference type="NCBI Taxonomy" id="2795389"/>
    <lineage>
        <taxon>Bacteria</taxon>
        <taxon>Pseudomonadati</taxon>
        <taxon>Pseudomonadota</taxon>
        <taxon>Betaproteobacteria</taxon>
        <taxon>Rhodocyclales</taxon>
        <taxon>Zoogloeaceae</taxon>
        <taxon>Denitromonas</taxon>
    </lineage>
</organism>
<proteinExistence type="evidence at protein level"/>
<feature type="chain" id="PRO_0000455404" description="Iodate reductase subunit IdrA">
    <location>
        <begin position="1"/>
        <end position="900"/>
    </location>
</feature>
<feature type="region of interest" description="Disordered" evidence="3">
    <location>
        <begin position="1"/>
        <end position="21"/>
    </location>
</feature>
<feature type="binding site" evidence="2">
    <location>
        <position position="35"/>
    </location>
    <ligand>
        <name>[3Fe-4S] cluster</name>
        <dbReference type="ChEBI" id="CHEBI:21137"/>
    </ligand>
</feature>
<feature type="binding site" evidence="2">
    <location>
        <position position="38"/>
    </location>
    <ligand>
        <name>[3Fe-4S] cluster</name>
        <dbReference type="ChEBI" id="CHEBI:21137"/>
    </ligand>
</feature>
<feature type="binding site" evidence="2">
    <location>
        <position position="42"/>
    </location>
    <ligand>
        <name>[3Fe-4S] cluster</name>
        <dbReference type="ChEBI" id="CHEBI:21137"/>
    </ligand>
</feature>
<feature type="site" description="Involved in charge transfer" evidence="2">
    <location>
        <position position="113"/>
    </location>
</feature>
<dbReference type="EC" id="1.-.-.-" evidence="7"/>
<dbReference type="EMBL" id="JAEKFT010000003">
    <property type="protein sequence ID" value="MBT0960284.1"/>
    <property type="molecule type" value="Genomic_DNA"/>
</dbReference>
<dbReference type="RefSeq" id="WP_214360036.1">
    <property type="nucleotide sequence ID" value="NZ_JAEKFT010000003.1"/>
</dbReference>
<dbReference type="SMR" id="P0DV66"/>
<dbReference type="Proteomes" id="UP000694660">
    <property type="component" value="Unassembled WGS sequence"/>
</dbReference>
<dbReference type="GO" id="GO:0016020">
    <property type="term" value="C:membrane"/>
    <property type="evidence" value="ECO:0007669"/>
    <property type="project" value="TreeGrafter"/>
</dbReference>
<dbReference type="GO" id="GO:1990204">
    <property type="term" value="C:oxidoreductase complex"/>
    <property type="evidence" value="ECO:0007669"/>
    <property type="project" value="UniProtKB-ARBA"/>
</dbReference>
<dbReference type="GO" id="GO:0042597">
    <property type="term" value="C:periplasmic space"/>
    <property type="evidence" value="ECO:0007669"/>
    <property type="project" value="UniProtKB-SubCell"/>
</dbReference>
<dbReference type="GO" id="GO:0051538">
    <property type="term" value="F:3 iron, 4 sulfur cluster binding"/>
    <property type="evidence" value="ECO:0007669"/>
    <property type="project" value="UniProtKB-KW"/>
</dbReference>
<dbReference type="GO" id="GO:0046872">
    <property type="term" value="F:metal ion binding"/>
    <property type="evidence" value="ECO:0007669"/>
    <property type="project" value="UniProtKB-KW"/>
</dbReference>
<dbReference type="GO" id="GO:0043546">
    <property type="term" value="F:molybdopterin cofactor binding"/>
    <property type="evidence" value="ECO:0007669"/>
    <property type="project" value="InterPro"/>
</dbReference>
<dbReference type="GO" id="GO:0003954">
    <property type="term" value="F:NADH dehydrogenase activity"/>
    <property type="evidence" value="ECO:0007669"/>
    <property type="project" value="TreeGrafter"/>
</dbReference>
<dbReference type="GO" id="GO:0022904">
    <property type="term" value="P:respiratory electron transport chain"/>
    <property type="evidence" value="ECO:0007669"/>
    <property type="project" value="TreeGrafter"/>
</dbReference>
<dbReference type="Gene3D" id="2.40.40.20">
    <property type="match status" value="1"/>
</dbReference>
<dbReference type="Gene3D" id="3.30.200.200">
    <property type="match status" value="1"/>
</dbReference>
<dbReference type="Gene3D" id="3.40.50.740">
    <property type="match status" value="1"/>
</dbReference>
<dbReference type="Gene3D" id="3.40.228.10">
    <property type="entry name" value="Dimethylsulfoxide Reductase, domain 2"/>
    <property type="match status" value="1"/>
</dbReference>
<dbReference type="InterPro" id="IPR041632">
    <property type="entry name" value="AioA/IdrA_3Fe-4S"/>
</dbReference>
<dbReference type="InterPro" id="IPR014066">
    <property type="entry name" value="AioA/IdrA_lsu"/>
</dbReference>
<dbReference type="InterPro" id="IPR009010">
    <property type="entry name" value="Asp_de-COase-like_dom_sf"/>
</dbReference>
<dbReference type="InterPro" id="IPR006657">
    <property type="entry name" value="MoPterin_dinucl-bd_dom"/>
</dbReference>
<dbReference type="InterPro" id="IPR006656">
    <property type="entry name" value="Mopterin_OxRdtase"/>
</dbReference>
<dbReference type="InterPro" id="IPR050123">
    <property type="entry name" value="Prok_molybdopt-oxidoreductase"/>
</dbReference>
<dbReference type="NCBIfam" id="TIGR02693">
    <property type="entry name" value="arsenite_ox_L"/>
    <property type="match status" value="1"/>
</dbReference>
<dbReference type="PANTHER" id="PTHR43105:SF10">
    <property type="entry name" value="NADH-QUINONE OXIDOREDUCTASE SUBUNIT G"/>
    <property type="match status" value="1"/>
</dbReference>
<dbReference type="PANTHER" id="PTHR43105">
    <property type="entry name" value="RESPIRATORY NITRATE REDUCTASE"/>
    <property type="match status" value="1"/>
</dbReference>
<dbReference type="Pfam" id="PF00384">
    <property type="entry name" value="Molybdopterin"/>
    <property type="match status" value="1"/>
</dbReference>
<dbReference type="Pfam" id="PF01568">
    <property type="entry name" value="Molydop_binding"/>
    <property type="match status" value="1"/>
</dbReference>
<dbReference type="Pfam" id="PF18465">
    <property type="entry name" value="Rieske_3"/>
    <property type="match status" value="1"/>
</dbReference>
<dbReference type="SUPFAM" id="SSF50692">
    <property type="entry name" value="ADC-like"/>
    <property type="match status" value="1"/>
</dbReference>
<dbReference type="SUPFAM" id="SSF53706">
    <property type="entry name" value="Formate dehydrogenase/DMSO reductase, domains 1-3"/>
    <property type="match status" value="1"/>
</dbReference>
<name>IDRA_DENI1</name>
<reference key="1">
    <citation type="journal article" date="2022" name="ISME J.">
        <title>Genetic and phylogenetic analysis of dissimilatory iodate-reducing bacteria identifies potential niches across the world's oceans.</title>
        <authorList>
            <person name="Reyes-Umana V."/>
            <person name="Henning Z."/>
            <person name="Lee K."/>
            <person name="Barnum T.P."/>
            <person name="Coates J.D."/>
        </authorList>
    </citation>
    <scope>NUCLEOTIDE SEQUENCE [LARGE SCALE GENOMIC DNA]</scope>
    <scope>FUNCTION</scope>
    <scope>SUBUNIT</scope>
    <scope>DISRUPTION PHENOTYPE</scope>
    <source>
        <strain>ATCC TSD-242 / DSM 113304 / IR12</strain>
    </source>
</reference>
<protein>
    <recommendedName>
        <fullName evidence="6">Iodate reductase subunit IdrA</fullName>
        <ecNumber evidence="7">1.-.-.-</ecNumber>
    </recommendedName>
</protein>